<comment type="function">
    <text evidence="1">Involved in peptide bond synthesis. Alleviates ribosome stalling that occurs when 3 or more consecutive Pro residues or the sequence PPG is present in a protein, possibly by augmenting the peptidyl transferase activity of the ribosome. Modification of Lys-34 is required for alleviation.</text>
</comment>
<comment type="pathway">
    <text evidence="1">Protein biosynthesis; polypeptide chain elongation.</text>
</comment>
<comment type="subcellular location">
    <subcellularLocation>
        <location evidence="1">Cytoplasm</location>
    </subcellularLocation>
</comment>
<comment type="PTM">
    <text evidence="1">May be beta-lysylated on the epsilon-amino group of Lys-34 by the combined action of EpmA and EpmB, and then hydroxylated on the C5 position of the same residue by EpmC (if this protein is present). Lysylation is critical for the stimulatory effect of EF-P on peptide-bond formation. The lysylation moiety may extend toward the peptidyltransferase center and stabilize the terminal 3-CCA end of the tRNA. Hydroxylation of the C5 position on Lys-34 may allow additional potential stabilizing hydrogen-bond interactions with the P-tRNA.</text>
</comment>
<comment type="similarity">
    <text evidence="1">Belongs to the elongation factor P family.</text>
</comment>
<name>EFP_BUCBP</name>
<evidence type="ECO:0000255" key="1">
    <source>
        <dbReference type="HAMAP-Rule" id="MF_00141"/>
    </source>
</evidence>
<keyword id="KW-0963">Cytoplasm</keyword>
<keyword id="KW-0251">Elongation factor</keyword>
<keyword id="KW-0379">Hydroxylation</keyword>
<keyword id="KW-0648">Protein biosynthesis</keyword>
<keyword id="KW-1185">Reference proteome</keyword>
<proteinExistence type="inferred from homology"/>
<accession>Q89B31</accession>
<feature type="chain" id="PRO_0000094217" description="Elongation factor P">
    <location>
        <begin position="1"/>
        <end position="189"/>
    </location>
</feature>
<feature type="modified residue" description="N6-(3,6-diaminohexanoyl)-5-hydroxylysine" evidence="1">
    <location>
        <position position="34"/>
    </location>
</feature>
<dbReference type="EMBL" id="AE016826">
    <property type="protein sequence ID" value="AAO26766.1"/>
    <property type="molecule type" value="Genomic_DNA"/>
</dbReference>
<dbReference type="RefSeq" id="WP_011091167.1">
    <property type="nucleotide sequence ID" value="NC_004545.1"/>
</dbReference>
<dbReference type="SMR" id="Q89B31"/>
<dbReference type="STRING" id="224915.bbp_023"/>
<dbReference type="KEGG" id="bab:bbp_023"/>
<dbReference type="eggNOG" id="COG0231">
    <property type="taxonomic scope" value="Bacteria"/>
</dbReference>
<dbReference type="HOGENOM" id="CLU_074944_0_0_6"/>
<dbReference type="OrthoDB" id="9801844at2"/>
<dbReference type="UniPathway" id="UPA00345"/>
<dbReference type="Proteomes" id="UP000000601">
    <property type="component" value="Chromosome"/>
</dbReference>
<dbReference type="GO" id="GO:0005737">
    <property type="term" value="C:cytoplasm"/>
    <property type="evidence" value="ECO:0007669"/>
    <property type="project" value="UniProtKB-SubCell"/>
</dbReference>
<dbReference type="GO" id="GO:0003746">
    <property type="term" value="F:translation elongation factor activity"/>
    <property type="evidence" value="ECO:0007669"/>
    <property type="project" value="UniProtKB-UniRule"/>
</dbReference>
<dbReference type="GO" id="GO:0043043">
    <property type="term" value="P:peptide biosynthetic process"/>
    <property type="evidence" value="ECO:0007669"/>
    <property type="project" value="InterPro"/>
</dbReference>
<dbReference type="CDD" id="cd04470">
    <property type="entry name" value="S1_EF-P_repeat_1"/>
    <property type="match status" value="1"/>
</dbReference>
<dbReference type="CDD" id="cd05794">
    <property type="entry name" value="S1_EF-P_repeat_2"/>
    <property type="match status" value="1"/>
</dbReference>
<dbReference type="FunFam" id="2.30.30.30:FF:000003">
    <property type="entry name" value="Elongation factor P"/>
    <property type="match status" value="1"/>
</dbReference>
<dbReference type="FunFam" id="2.40.50.140:FF:000004">
    <property type="entry name" value="Elongation factor P"/>
    <property type="match status" value="1"/>
</dbReference>
<dbReference type="Gene3D" id="2.30.30.30">
    <property type="match status" value="1"/>
</dbReference>
<dbReference type="Gene3D" id="2.40.50.140">
    <property type="entry name" value="Nucleic acid-binding proteins"/>
    <property type="match status" value="2"/>
</dbReference>
<dbReference type="HAMAP" id="MF_00141">
    <property type="entry name" value="EF_P"/>
    <property type="match status" value="1"/>
</dbReference>
<dbReference type="InterPro" id="IPR015365">
    <property type="entry name" value="Elong-fact-P_C"/>
</dbReference>
<dbReference type="InterPro" id="IPR012340">
    <property type="entry name" value="NA-bd_OB-fold"/>
</dbReference>
<dbReference type="InterPro" id="IPR014722">
    <property type="entry name" value="Rib_uL2_dom2"/>
</dbReference>
<dbReference type="InterPro" id="IPR020599">
    <property type="entry name" value="Transl_elong_fac_P/YeiP"/>
</dbReference>
<dbReference type="InterPro" id="IPR013185">
    <property type="entry name" value="Transl_elong_KOW-like"/>
</dbReference>
<dbReference type="InterPro" id="IPR001059">
    <property type="entry name" value="Transl_elong_P/YeiP_cen"/>
</dbReference>
<dbReference type="InterPro" id="IPR013852">
    <property type="entry name" value="Transl_elong_P/YeiP_CS"/>
</dbReference>
<dbReference type="InterPro" id="IPR011768">
    <property type="entry name" value="Transl_elongation_fac_P"/>
</dbReference>
<dbReference type="InterPro" id="IPR008991">
    <property type="entry name" value="Translation_prot_SH3-like_sf"/>
</dbReference>
<dbReference type="NCBIfam" id="TIGR00038">
    <property type="entry name" value="efp"/>
    <property type="match status" value="1"/>
</dbReference>
<dbReference type="NCBIfam" id="NF001810">
    <property type="entry name" value="PRK00529.1"/>
    <property type="match status" value="1"/>
</dbReference>
<dbReference type="PANTHER" id="PTHR30053">
    <property type="entry name" value="ELONGATION FACTOR P"/>
    <property type="match status" value="1"/>
</dbReference>
<dbReference type="PANTHER" id="PTHR30053:SF12">
    <property type="entry name" value="ELONGATION FACTOR P (EF-P) FAMILY PROTEIN"/>
    <property type="match status" value="1"/>
</dbReference>
<dbReference type="Pfam" id="PF01132">
    <property type="entry name" value="EFP"/>
    <property type="match status" value="1"/>
</dbReference>
<dbReference type="Pfam" id="PF08207">
    <property type="entry name" value="EFP_N"/>
    <property type="match status" value="1"/>
</dbReference>
<dbReference type="Pfam" id="PF09285">
    <property type="entry name" value="Elong-fact-P_C"/>
    <property type="match status" value="1"/>
</dbReference>
<dbReference type="PIRSF" id="PIRSF005901">
    <property type="entry name" value="EF-P"/>
    <property type="match status" value="1"/>
</dbReference>
<dbReference type="SMART" id="SM01185">
    <property type="entry name" value="EFP"/>
    <property type="match status" value="1"/>
</dbReference>
<dbReference type="SMART" id="SM00841">
    <property type="entry name" value="Elong-fact-P_C"/>
    <property type="match status" value="1"/>
</dbReference>
<dbReference type="SUPFAM" id="SSF50249">
    <property type="entry name" value="Nucleic acid-binding proteins"/>
    <property type="match status" value="2"/>
</dbReference>
<dbReference type="SUPFAM" id="SSF50104">
    <property type="entry name" value="Translation proteins SH3-like domain"/>
    <property type="match status" value="1"/>
</dbReference>
<dbReference type="PROSITE" id="PS01275">
    <property type="entry name" value="EFP"/>
    <property type="match status" value="1"/>
</dbReference>
<reference key="1">
    <citation type="journal article" date="2003" name="Proc. Natl. Acad. Sci. U.S.A.">
        <title>Reductive genome evolution in Buchnera aphidicola.</title>
        <authorList>
            <person name="van Ham R.C.H.J."/>
            <person name="Kamerbeek J."/>
            <person name="Palacios C."/>
            <person name="Rausell C."/>
            <person name="Abascal F."/>
            <person name="Bastolla U."/>
            <person name="Fernandez J.M."/>
            <person name="Jimenez L."/>
            <person name="Postigo M."/>
            <person name="Silva F.J."/>
            <person name="Tamames J."/>
            <person name="Viguera E."/>
            <person name="Latorre A."/>
            <person name="Valencia A."/>
            <person name="Moran F."/>
            <person name="Moya A."/>
        </authorList>
    </citation>
    <scope>NUCLEOTIDE SEQUENCE [LARGE SCALE GENOMIC DNA]</scope>
    <source>
        <strain>Bp</strain>
    </source>
</reference>
<organism>
    <name type="scientific">Buchnera aphidicola subsp. Baizongia pistaciae (strain Bp)</name>
    <dbReference type="NCBI Taxonomy" id="224915"/>
    <lineage>
        <taxon>Bacteria</taxon>
        <taxon>Pseudomonadati</taxon>
        <taxon>Pseudomonadota</taxon>
        <taxon>Gammaproteobacteria</taxon>
        <taxon>Enterobacterales</taxon>
        <taxon>Erwiniaceae</taxon>
        <taxon>Buchnera</taxon>
    </lineage>
</organism>
<sequence>MELCHSNQLKIGLKIIYNNEPCIVVSNEFIKPGKGQAFFRVRLKNLLNKKLIDKTCKYSDCFKIANVIEITATYMFTDKKVWTFMDKKSFEQIFVEKNIIKNVLPWLLEQHDYIISLWNDQPISIVYSSNFIELIVVNTIPNARSGAINTYSKLALLNTGVTIKVPIFIQIGQIIKVDTRTSEYISKIS</sequence>
<protein>
    <recommendedName>
        <fullName evidence="1">Elongation factor P</fullName>
        <shortName evidence="1">EF-P</shortName>
    </recommendedName>
</protein>
<gene>
    <name evidence="1" type="primary">efp</name>
    <name type="ordered locus">bbp_023</name>
</gene>